<keyword id="KW-0028">Amino-acid biosynthesis</keyword>
<keyword id="KW-0220">Diaminopimelate biosynthesis</keyword>
<keyword id="KW-0457">Lysine biosynthesis</keyword>
<keyword id="KW-0486">Methionine biosynthesis</keyword>
<keyword id="KW-0521">NADP</keyword>
<keyword id="KW-0560">Oxidoreductase</keyword>
<keyword id="KW-1185">Reference proteome</keyword>
<keyword id="KW-0791">Threonine biosynthesis</keyword>
<protein>
    <recommendedName>
        <fullName evidence="1">Aspartate-semialdehyde dehydrogenase</fullName>
        <shortName evidence="1">ASA dehydrogenase</shortName>
        <shortName evidence="1">ASADH</shortName>
        <ecNumber evidence="1">1.2.1.11</ecNumber>
    </recommendedName>
    <alternativeName>
        <fullName evidence="1">Aspartate-beta-semialdehyde dehydrogenase</fullName>
    </alternativeName>
</protein>
<comment type="function">
    <text evidence="1">Catalyzes the NADPH-dependent formation of L-aspartate-semialdehyde (L-ASA) by the reductive dephosphorylation of L-aspartyl-4-phosphate.</text>
</comment>
<comment type="catalytic activity">
    <reaction evidence="1">
        <text>L-aspartate 4-semialdehyde + phosphate + NADP(+) = 4-phospho-L-aspartate + NADPH + H(+)</text>
        <dbReference type="Rhea" id="RHEA:24284"/>
        <dbReference type="ChEBI" id="CHEBI:15378"/>
        <dbReference type="ChEBI" id="CHEBI:43474"/>
        <dbReference type="ChEBI" id="CHEBI:57535"/>
        <dbReference type="ChEBI" id="CHEBI:57783"/>
        <dbReference type="ChEBI" id="CHEBI:58349"/>
        <dbReference type="ChEBI" id="CHEBI:537519"/>
        <dbReference type="EC" id="1.2.1.11"/>
    </reaction>
</comment>
<comment type="pathway">
    <text evidence="1">Amino-acid biosynthesis; L-lysine biosynthesis via DAP pathway; (S)-tetrahydrodipicolinate from L-aspartate: step 2/4.</text>
</comment>
<comment type="pathway">
    <text evidence="1">Amino-acid biosynthesis; L-methionine biosynthesis via de novo pathway; L-homoserine from L-aspartate: step 2/3.</text>
</comment>
<comment type="pathway">
    <text evidence="1">Amino-acid biosynthesis; L-threonine biosynthesis; L-threonine from L-aspartate: step 2/5.</text>
</comment>
<comment type="subunit">
    <text evidence="1">Homodimer.</text>
</comment>
<comment type="similarity">
    <text evidence="1">Belongs to the aspartate-semialdehyde dehydrogenase family.</text>
</comment>
<proteinExistence type="inferred from homology"/>
<gene>
    <name evidence="1" type="primary">asd</name>
    <name type="ordered locus">MTH_799</name>
</gene>
<dbReference type="EC" id="1.2.1.11" evidence="1"/>
<dbReference type="EMBL" id="AE000666">
    <property type="protein sequence ID" value="AAB85299.1"/>
    <property type="molecule type" value="Genomic_DNA"/>
</dbReference>
<dbReference type="PIR" id="E69206">
    <property type="entry name" value="E69206"/>
</dbReference>
<dbReference type="RefSeq" id="WP_010876434.1">
    <property type="nucleotide sequence ID" value="NC_000916.1"/>
</dbReference>
<dbReference type="SMR" id="O26890"/>
<dbReference type="FunCoup" id="O26890">
    <property type="interactions" value="184"/>
</dbReference>
<dbReference type="STRING" id="187420.MTH_799"/>
<dbReference type="PaxDb" id="187420-MTH_799"/>
<dbReference type="EnsemblBacteria" id="AAB85299">
    <property type="protein sequence ID" value="AAB85299"/>
    <property type="gene ID" value="MTH_799"/>
</dbReference>
<dbReference type="GeneID" id="82297251"/>
<dbReference type="KEGG" id="mth:MTH_799"/>
<dbReference type="PATRIC" id="fig|187420.15.peg.784"/>
<dbReference type="HOGENOM" id="CLU_049966_1_0_2"/>
<dbReference type="InParanoid" id="O26890"/>
<dbReference type="UniPathway" id="UPA00034">
    <property type="reaction ID" value="UER00016"/>
</dbReference>
<dbReference type="UniPathway" id="UPA00050">
    <property type="reaction ID" value="UER00463"/>
</dbReference>
<dbReference type="UniPathway" id="UPA00051">
    <property type="reaction ID" value="UER00464"/>
</dbReference>
<dbReference type="Proteomes" id="UP000005223">
    <property type="component" value="Chromosome"/>
</dbReference>
<dbReference type="GO" id="GO:0004073">
    <property type="term" value="F:aspartate-semialdehyde dehydrogenase activity"/>
    <property type="evidence" value="ECO:0007669"/>
    <property type="project" value="UniProtKB-UniRule"/>
</dbReference>
<dbReference type="GO" id="GO:0051287">
    <property type="term" value="F:NAD binding"/>
    <property type="evidence" value="ECO:0007669"/>
    <property type="project" value="InterPro"/>
</dbReference>
<dbReference type="GO" id="GO:0050661">
    <property type="term" value="F:NADP binding"/>
    <property type="evidence" value="ECO:0007669"/>
    <property type="project" value="UniProtKB-UniRule"/>
</dbReference>
<dbReference type="GO" id="GO:0046983">
    <property type="term" value="F:protein dimerization activity"/>
    <property type="evidence" value="ECO:0007669"/>
    <property type="project" value="InterPro"/>
</dbReference>
<dbReference type="GO" id="GO:0071266">
    <property type="term" value="P:'de novo' L-methionine biosynthetic process"/>
    <property type="evidence" value="ECO:0007669"/>
    <property type="project" value="UniProtKB-UniRule"/>
</dbReference>
<dbReference type="GO" id="GO:0019877">
    <property type="term" value="P:diaminopimelate biosynthetic process"/>
    <property type="evidence" value="ECO:0007669"/>
    <property type="project" value="UniProtKB-UniRule"/>
</dbReference>
<dbReference type="GO" id="GO:0009089">
    <property type="term" value="P:lysine biosynthetic process via diaminopimelate"/>
    <property type="evidence" value="ECO:0007669"/>
    <property type="project" value="UniProtKB-UniRule"/>
</dbReference>
<dbReference type="GO" id="GO:0009088">
    <property type="term" value="P:threonine biosynthetic process"/>
    <property type="evidence" value="ECO:0007669"/>
    <property type="project" value="UniProtKB-UniRule"/>
</dbReference>
<dbReference type="CDD" id="cd18130">
    <property type="entry name" value="ASADH_C_arch_fung_like"/>
    <property type="match status" value="1"/>
</dbReference>
<dbReference type="CDD" id="cd02315">
    <property type="entry name" value="ScASADH_like_N"/>
    <property type="match status" value="1"/>
</dbReference>
<dbReference type="FunFam" id="3.30.360.10:FF:000016">
    <property type="entry name" value="Probable aspartate-semialdehyde dehydrogenase"/>
    <property type="match status" value="1"/>
</dbReference>
<dbReference type="Gene3D" id="3.30.360.10">
    <property type="entry name" value="Dihydrodipicolinate Reductase, domain 2"/>
    <property type="match status" value="1"/>
</dbReference>
<dbReference type="Gene3D" id="3.40.50.720">
    <property type="entry name" value="NAD(P)-binding Rossmann-like Domain"/>
    <property type="match status" value="1"/>
</dbReference>
<dbReference type="HAMAP" id="MF_02121">
    <property type="entry name" value="ASADH"/>
    <property type="match status" value="1"/>
</dbReference>
<dbReference type="InterPro" id="IPR051823">
    <property type="entry name" value="ASADH-related"/>
</dbReference>
<dbReference type="InterPro" id="IPR000319">
    <property type="entry name" value="Asp-semialdehyde_DH_CS"/>
</dbReference>
<dbReference type="InterPro" id="IPR005676">
    <property type="entry name" value="Asp_semi-ald_DH_pep-lack"/>
</dbReference>
<dbReference type="InterPro" id="IPR012080">
    <property type="entry name" value="Asp_semialdehyde_DH"/>
</dbReference>
<dbReference type="InterPro" id="IPR036291">
    <property type="entry name" value="NAD(P)-bd_dom_sf"/>
</dbReference>
<dbReference type="InterPro" id="IPR000534">
    <property type="entry name" value="Semialdehyde_DH_NAD-bd"/>
</dbReference>
<dbReference type="InterPro" id="IPR012280">
    <property type="entry name" value="Semialdhyde_DH_dimer_dom"/>
</dbReference>
<dbReference type="NCBIfam" id="TIGR00978">
    <property type="entry name" value="asd_EA"/>
    <property type="match status" value="1"/>
</dbReference>
<dbReference type="NCBIfam" id="NF006416">
    <property type="entry name" value="PRK08664.1"/>
    <property type="match status" value="1"/>
</dbReference>
<dbReference type="PANTHER" id="PTHR46718">
    <property type="entry name" value="ASPARTATE-SEMIALDEHYDE DEHYDROGENASE"/>
    <property type="match status" value="1"/>
</dbReference>
<dbReference type="PANTHER" id="PTHR46718:SF1">
    <property type="entry name" value="ASPARTATE-SEMIALDEHYDE DEHYDROGENASE"/>
    <property type="match status" value="1"/>
</dbReference>
<dbReference type="Pfam" id="PF01118">
    <property type="entry name" value="Semialdhyde_dh"/>
    <property type="match status" value="1"/>
</dbReference>
<dbReference type="Pfam" id="PF02774">
    <property type="entry name" value="Semialdhyde_dhC"/>
    <property type="match status" value="1"/>
</dbReference>
<dbReference type="PIRSF" id="PIRSF000148">
    <property type="entry name" value="ASA_dh"/>
    <property type="match status" value="1"/>
</dbReference>
<dbReference type="SMART" id="SM00859">
    <property type="entry name" value="Semialdhyde_dh"/>
    <property type="match status" value="1"/>
</dbReference>
<dbReference type="SUPFAM" id="SSF55347">
    <property type="entry name" value="Glyceraldehyde-3-phosphate dehydrogenase-like, C-terminal domain"/>
    <property type="match status" value="1"/>
</dbReference>
<dbReference type="SUPFAM" id="SSF51735">
    <property type="entry name" value="NAD(P)-binding Rossmann-fold domains"/>
    <property type="match status" value="1"/>
</dbReference>
<dbReference type="PROSITE" id="PS01103">
    <property type="entry name" value="ASD"/>
    <property type="match status" value="1"/>
</dbReference>
<accession>O26890</accession>
<feature type="chain" id="PRO_0000141398" description="Aspartate-semialdehyde dehydrogenase">
    <location>
        <begin position="1"/>
        <end position="347"/>
    </location>
</feature>
<feature type="region of interest" description="Disordered" evidence="2">
    <location>
        <begin position="276"/>
        <end position="299"/>
    </location>
</feature>
<feature type="compositionally biased region" description="Basic and acidic residues" evidence="2">
    <location>
        <begin position="281"/>
        <end position="299"/>
    </location>
</feature>
<feature type="active site" description="Acyl-thioester intermediate" evidence="1">
    <location>
        <position position="147"/>
    </location>
</feature>
<feature type="active site" description="Proton acceptor" evidence="1">
    <location>
        <position position="240"/>
    </location>
</feature>
<feature type="binding site" evidence="1">
    <location>
        <begin position="10"/>
        <end position="13"/>
    </location>
    <ligand>
        <name>NADP(+)</name>
        <dbReference type="ChEBI" id="CHEBI:58349"/>
    </ligand>
</feature>
<feature type="binding site" evidence="1">
    <location>
        <begin position="37"/>
        <end position="38"/>
    </location>
    <ligand>
        <name>NADP(+)</name>
        <dbReference type="ChEBI" id="CHEBI:58349"/>
    </ligand>
</feature>
<feature type="binding site" evidence="1">
    <location>
        <position position="108"/>
    </location>
    <ligand>
        <name>phosphate</name>
        <dbReference type="ChEBI" id="CHEBI:43474"/>
    </ligand>
</feature>
<feature type="binding site" evidence="1">
    <location>
        <position position="174"/>
    </location>
    <ligand>
        <name>substrate</name>
    </ligand>
</feature>
<feature type="binding site" evidence="1">
    <location>
        <begin position="177"/>
        <end position="178"/>
    </location>
    <ligand>
        <name>NADP(+)</name>
        <dbReference type="ChEBI" id="CHEBI:58349"/>
    </ligand>
</feature>
<feature type="binding site" evidence="1">
    <location>
        <position position="200"/>
    </location>
    <ligand>
        <name>substrate</name>
    </ligand>
</feature>
<feature type="binding site" evidence="1">
    <location>
        <position position="203"/>
    </location>
    <ligand>
        <name>phosphate</name>
        <dbReference type="ChEBI" id="CHEBI:43474"/>
    </ligand>
</feature>
<feature type="binding site" evidence="1">
    <location>
        <position position="233"/>
    </location>
    <ligand>
        <name>substrate</name>
    </ligand>
</feature>
<feature type="binding site" evidence="1">
    <location>
        <begin position="327"/>
        <end position="328"/>
    </location>
    <ligand>
        <name>NADP(+)</name>
        <dbReference type="ChEBI" id="CHEBI:58349"/>
    </ligand>
</feature>
<reference key="1">
    <citation type="journal article" date="1997" name="J. Bacteriol.">
        <title>Complete genome sequence of Methanobacterium thermoautotrophicum deltaH: functional analysis and comparative genomics.</title>
        <authorList>
            <person name="Smith D.R."/>
            <person name="Doucette-Stamm L.A."/>
            <person name="Deloughery C."/>
            <person name="Lee H.-M."/>
            <person name="Dubois J."/>
            <person name="Aldredge T."/>
            <person name="Bashirzadeh R."/>
            <person name="Blakely D."/>
            <person name="Cook R."/>
            <person name="Gilbert K."/>
            <person name="Harrison D."/>
            <person name="Hoang L."/>
            <person name="Keagle P."/>
            <person name="Lumm W."/>
            <person name="Pothier B."/>
            <person name="Qiu D."/>
            <person name="Spadafora R."/>
            <person name="Vicare R."/>
            <person name="Wang Y."/>
            <person name="Wierzbowski J."/>
            <person name="Gibson R."/>
            <person name="Jiwani N."/>
            <person name="Caruso A."/>
            <person name="Bush D."/>
            <person name="Safer H."/>
            <person name="Patwell D."/>
            <person name="Prabhakar S."/>
            <person name="McDougall S."/>
            <person name="Shimer G."/>
            <person name="Goyal A."/>
            <person name="Pietrovski S."/>
            <person name="Church G.M."/>
            <person name="Daniels C.J."/>
            <person name="Mao J.-I."/>
            <person name="Rice P."/>
            <person name="Noelling J."/>
            <person name="Reeve J.N."/>
        </authorList>
    </citation>
    <scope>NUCLEOTIDE SEQUENCE [LARGE SCALE GENOMIC DNA]</scope>
    <source>
        <strain>ATCC 29096 / DSM 1053 / JCM 10044 / NBRC 100330 / Delta H</strain>
    </source>
</reference>
<name>DHAS_METTH</name>
<organism>
    <name type="scientific">Methanothermobacter thermautotrophicus (strain ATCC 29096 / DSM 1053 / JCM 10044 / NBRC 100330 / Delta H)</name>
    <name type="common">Methanobacterium thermoautotrophicum</name>
    <dbReference type="NCBI Taxonomy" id="187420"/>
    <lineage>
        <taxon>Archaea</taxon>
        <taxon>Methanobacteriati</taxon>
        <taxon>Methanobacteriota</taxon>
        <taxon>Methanomada group</taxon>
        <taxon>Methanobacteria</taxon>
        <taxon>Methanobacteriales</taxon>
        <taxon>Methanobacteriaceae</taxon>
        <taxon>Methanothermobacter</taxon>
    </lineage>
</organism>
<sequence length="347" mass="38031">MVNVGVLGATGMVGQRFIQMLDKHPEFELTTLAASSRSAGKPYGEVANWYLDCEMPESVRDMEVVETDPSAVGDVDILFSALPADVARKVEPKFAEKYIVASNASAMRMEPDVPLVIPEVNPEFLDLIEVQQRRRGWDGFIVTNPNCSTIALTLTLKPIYDAYTIKRVYVSTMQAVSGAGYNGVPSMAILDNLVPFIGGEEEKIETETLHLLGELDEGVVKPASFGVSASCHRVPVVDGHTEAVFIELDDEFDIDDVREAMDKFRGLPQKLGLHSAPEKPVVVRDEENRPQPRMDRDMDGGMAVTVGRLREDAAFKNSLRYVLVGHNTVRGAAGASILNAELINEIL</sequence>
<evidence type="ECO:0000255" key="1">
    <source>
        <dbReference type="HAMAP-Rule" id="MF_02121"/>
    </source>
</evidence>
<evidence type="ECO:0000256" key="2">
    <source>
        <dbReference type="SAM" id="MobiDB-lite"/>
    </source>
</evidence>